<dbReference type="EC" id="3.1.26.5" evidence="1"/>
<dbReference type="EMBL" id="CP000431">
    <property type="protein sequence ID" value="ABG95467.1"/>
    <property type="molecule type" value="Genomic_DNA"/>
</dbReference>
<dbReference type="RefSeq" id="WP_011596258.1">
    <property type="nucleotide sequence ID" value="NC_008268.1"/>
</dbReference>
<dbReference type="SMR" id="Q0SAG9"/>
<dbReference type="KEGG" id="rha:RHA1_ro03664"/>
<dbReference type="eggNOG" id="COG0594">
    <property type="taxonomic scope" value="Bacteria"/>
</dbReference>
<dbReference type="HOGENOM" id="CLU_117179_4_1_11"/>
<dbReference type="OrthoDB" id="196964at2"/>
<dbReference type="Proteomes" id="UP000008710">
    <property type="component" value="Chromosome"/>
</dbReference>
<dbReference type="GO" id="GO:0030677">
    <property type="term" value="C:ribonuclease P complex"/>
    <property type="evidence" value="ECO:0007669"/>
    <property type="project" value="TreeGrafter"/>
</dbReference>
<dbReference type="GO" id="GO:0042781">
    <property type="term" value="F:3'-tRNA processing endoribonuclease activity"/>
    <property type="evidence" value="ECO:0007669"/>
    <property type="project" value="TreeGrafter"/>
</dbReference>
<dbReference type="GO" id="GO:0004526">
    <property type="term" value="F:ribonuclease P activity"/>
    <property type="evidence" value="ECO:0007669"/>
    <property type="project" value="UniProtKB-UniRule"/>
</dbReference>
<dbReference type="GO" id="GO:0000049">
    <property type="term" value="F:tRNA binding"/>
    <property type="evidence" value="ECO:0007669"/>
    <property type="project" value="UniProtKB-UniRule"/>
</dbReference>
<dbReference type="GO" id="GO:0001682">
    <property type="term" value="P:tRNA 5'-leader removal"/>
    <property type="evidence" value="ECO:0007669"/>
    <property type="project" value="UniProtKB-UniRule"/>
</dbReference>
<dbReference type="Gene3D" id="3.30.230.10">
    <property type="match status" value="1"/>
</dbReference>
<dbReference type="HAMAP" id="MF_00227">
    <property type="entry name" value="RNase_P"/>
    <property type="match status" value="1"/>
</dbReference>
<dbReference type="InterPro" id="IPR020568">
    <property type="entry name" value="Ribosomal_Su5_D2-typ_SF"/>
</dbReference>
<dbReference type="InterPro" id="IPR014721">
    <property type="entry name" value="Ribsml_uS5_D2-typ_fold_subgr"/>
</dbReference>
<dbReference type="InterPro" id="IPR000100">
    <property type="entry name" value="RNase_P"/>
</dbReference>
<dbReference type="InterPro" id="IPR020539">
    <property type="entry name" value="RNase_P_CS"/>
</dbReference>
<dbReference type="NCBIfam" id="TIGR00188">
    <property type="entry name" value="rnpA"/>
    <property type="match status" value="1"/>
</dbReference>
<dbReference type="PANTHER" id="PTHR33992">
    <property type="entry name" value="RIBONUCLEASE P PROTEIN COMPONENT"/>
    <property type="match status" value="1"/>
</dbReference>
<dbReference type="PANTHER" id="PTHR33992:SF1">
    <property type="entry name" value="RIBONUCLEASE P PROTEIN COMPONENT"/>
    <property type="match status" value="1"/>
</dbReference>
<dbReference type="Pfam" id="PF00825">
    <property type="entry name" value="Ribonuclease_P"/>
    <property type="match status" value="1"/>
</dbReference>
<dbReference type="SUPFAM" id="SSF54211">
    <property type="entry name" value="Ribosomal protein S5 domain 2-like"/>
    <property type="match status" value="1"/>
</dbReference>
<dbReference type="PROSITE" id="PS00648">
    <property type="entry name" value="RIBONUCLEASE_P"/>
    <property type="match status" value="1"/>
</dbReference>
<name>RNPA_RHOJR</name>
<protein>
    <recommendedName>
        <fullName evidence="1">Ribonuclease P protein component</fullName>
        <shortName evidence="1">RNase P protein</shortName>
        <shortName evidence="1">RNaseP protein</shortName>
        <ecNumber evidence="1">3.1.26.5</ecNumber>
    </recommendedName>
    <alternativeName>
        <fullName evidence="1">Protein C5</fullName>
    </alternativeName>
</protein>
<gene>
    <name evidence="1" type="primary">rnpA</name>
    <name type="ordered locus">RHA1_ro03664</name>
</gene>
<evidence type="ECO:0000255" key="1">
    <source>
        <dbReference type="HAMAP-Rule" id="MF_00227"/>
    </source>
</evidence>
<feature type="chain" id="PRO_1000021451" description="Ribonuclease P protein component">
    <location>
        <begin position="1"/>
        <end position="125"/>
    </location>
</feature>
<keyword id="KW-0255">Endonuclease</keyword>
<keyword id="KW-0378">Hydrolase</keyword>
<keyword id="KW-0540">Nuclease</keyword>
<keyword id="KW-0694">RNA-binding</keyword>
<keyword id="KW-0819">tRNA processing</keyword>
<comment type="function">
    <text evidence="1">RNaseP catalyzes the removal of the 5'-leader sequence from pre-tRNA to produce the mature 5'-terminus. It can also cleave other RNA substrates such as 4.5S RNA. The protein component plays an auxiliary but essential role in vivo by binding to the 5'-leader sequence and broadening the substrate specificity of the ribozyme.</text>
</comment>
<comment type="catalytic activity">
    <reaction evidence="1">
        <text>Endonucleolytic cleavage of RNA, removing 5'-extranucleotides from tRNA precursor.</text>
        <dbReference type="EC" id="3.1.26.5"/>
    </reaction>
</comment>
<comment type="subunit">
    <text evidence="1">Consists of a catalytic RNA component (M1 or rnpB) and a protein subunit.</text>
</comment>
<comment type="similarity">
    <text evidence="1">Belongs to the RnpA family.</text>
</comment>
<reference key="1">
    <citation type="journal article" date="2006" name="Proc. Natl. Acad. Sci. U.S.A.">
        <title>The complete genome of Rhodococcus sp. RHA1 provides insights into a catabolic powerhouse.</title>
        <authorList>
            <person name="McLeod M.P."/>
            <person name="Warren R.L."/>
            <person name="Hsiao W.W.L."/>
            <person name="Araki N."/>
            <person name="Myhre M."/>
            <person name="Fernandes C."/>
            <person name="Miyazawa D."/>
            <person name="Wong W."/>
            <person name="Lillquist A.L."/>
            <person name="Wang D."/>
            <person name="Dosanjh M."/>
            <person name="Hara H."/>
            <person name="Petrescu A."/>
            <person name="Morin R.D."/>
            <person name="Yang G."/>
            <person name="Stott J.M."/>
            <person name="Schein J.E."/>
            <person name="Shin H."/>
            <person name="Smailus D."/>
            <person name="Siddiqui A.S."/>
            <person name="Marra M.A."/>
            <person name="Jones S.J.M."/>
            <person name="Holt R."/>
            <person name="Brinkman F.S.L."/>
            <person name="Miyauchi K."/>
            <person name="Fukuda M."/>
            <person name="Davies J.E."/>
            <person name="Mohn W.W."/>
            <person name="Eltis L.D."/>
        </authorList>
    </citation>
    <scope>NUCLEOTIDE SEQUENCE [LARGE SCALE GENOMIC DNA]</scope>
    <source>
        <strain>RHA1</strain>
    </source>
</reference>
<accession>Q0SAG9</accession>
<proteinExistence type="inferred from homology"/>
<organism>
    <name type="scientific">Rhodococcus jostii (strain RHA1)</name>
    <dbReference type="NCBI Taxonomy" id="101510"/>
    <lineage>
        <taxon>Bacteria</taxon>
        <taxon>Bacillati</taxon>
        <taxon>Actinomycetota</taxon>
        <taxon>Actinomycetes</taxon>
        <taxon>Mycobacteriales</taxon>
        <taxon>Nocardiaceae</taxon>
        <taxon>Rhodococcus</taxon>
    </lineage>
</organism>
<sequence>MLPEPHRLRRHSDFSMTVRRGRRMGRRDLVVHAFDRAQADELVSSGGPRFGLVVSKAVGPAVIRHRVARRLRHICIDLVDVVPRGTDVVIRALPGAATASSRDLEKQLRAGLLRLDLLAPVSTSA</sequence>